<feature type="chain" id="PRO_0000419760" description="Deoxyhypusine synthase">
    <location>
        <begin position="1"/>
        <end position="601"/>
    </location>
</feature>
<feature type="region of interest" description="Disordered" evidence="3">
    <location>
        <begin position="210"/>
        <end position="242"/>
    </location>
</feature>
<feature type="region of interest" description="Disordered" evidence="3">
    <location>
        <begin position="411"/>
        <end position="451"/>
    </location>
</feature>
<feature type="region of interest" description="Disordered" evidence="3">
    <location>
        <begin position="568"/>
        <end position="601"/>
    </location>
</feature>
<feature type="compositionally biased region" description="Polar residues" evidence="3">
    <location>
        <begin position="211"/>
        <end position="220"/>
    </location>
</feature>
<feature type="compositionally biased region" description="Low complexity" evidence="3">
    <location>
        <begin position="440"/>
        <end position="451"/>
    </location>
</feature>
<feature type="active site" description="Nucleophile" evidence="1">
    <location>
        <position position="535"/>
    </location>
</feature>
<feature type="binding site" evidence="1">
    <location>
        <begin position="109"/>
        <end position="113"/>
    </location>
    <ligand>
        <name>NAD(+)</name>
        <dbReference type="ChEBI" id="CHEBI:57540"/>
    </ligand>
</feature>
<feature type="binding site" evidence="1">
    <location>
        <begin position="184"/>
        <end position="186"/>
    </location>
    <ligand>
        <name>NAD(+)</name>
        <dbReference type="ChEBI" id="CHEBI:57540"/>
    </ligand>
</feature>
<feature type="binding site" evidence="1">
    <location>
        <begin position="189"/>
        <end position="190"/>
    </location>
    <ligand>
        <name>spermidine</name>
        <dbReference type="ChEBI" id="CHEBI:57834"/>
    </ligand>
</feature>
<feature type="binding site" evidence="1">
    <location>
        <position position="398"/>
    </location>
    <ligand>
        <name>NAD(+)</name>
        <dbReference type="ChEBI" id="CHEBI:57540"/>
    </ligand>
</feature>
<feature type="binding site" evidence="1">
    <location>
        <position position="489"/>
    </location>
    <ligand>
        <name>NAD(+)</name>
        <dbReference type="ChEBI" id="CHEBI:57540"/>
    </ligand>
</feature>
<feature type="binding site" evidence="1">
    <location>
        <position position="494"/>
    </location>
    <ligand>
        <name>spermidine</name>
        <dbReference type="ChEBI" id="CHEBI:57834"/>
    </ligand>
</feature>
<feature type="binding site" evidence="1">
    <location>
        <begin position="514"/>
        <end position="515"/>
    </location>
    <ligand>
        <name>NAD(+)</name>
        <dbReference type="ChEBI" id="CHEBI:57540"/>
    </ligand>
</feature>
<feature type="binding site" evidence="1">
    <location>
        <begin position="520"/>
        <end position="522"/>
    </location>
    <ligand>
        <name>spermidine</name>
        <dbReference type="ChEBI" id="CHEBI:57834"/>
    </ligand>
</feature>
<feature type="binding site" evidence="1">
    <location>
        <begin position="529"/>
        <end position="535"/>
    </location>
    <ligand>
        <name>spermidine</name>
        <dbReference type="ChEBI" id="CHEBI:57834"/>
    </ligand>
</feature>
<feature type="binding site" evidence="1">
    <location>
        <begin position="548"/>
        <end position="549"/>
    </location>
    <ligand>
        <name>NAD(+)</name>
        <dbReference type="ChEBI" id="CHEBI:57540"/>
    </ligand>
</feature>
<accession>B5APK2</accession>
<sequence length="601" mass="64440">MANIAESAVLVSSASSAQAVAKLTQVRGPTSGFDKAQHIIGSYSTMGFQATNYGLARSIAQRMIRKQPPSKVYQIKDGKYVLVPPDVGEDGKTLQQEHVYPNLFMGVTANLMGTGCREAVRFLVQEGVVHRSLEASAPASADGTDDQLMFARLKREYVETYGGPPHPDEEIPRAHSFLCAIVVSGGGVEHDLRRACTAYTLHHYASEAQGHVSSTVSSEATAPPKGLQQRAEKPLGTRAAAGTAKPARFGNVEYPRQGSTGSELFDCLMRTFVQRLCARQARLRAAAMAKPIPDKYDDVCSWSVTPSEVWALCGLWLVDMLAEALGAVRSCTSRLTSGSAVGTAESVTANGKGPEADRDAHIATSASYRAEALARARTTVVYWAALQQVSLFSPSFVDGDITSYLLPTPAPAARPAHRKGGPVADENAGNSKELKRSRKASSSSSTSATAVKVKPPVVERLQVDLVRDVYSINKLAMLSKKTGMLICGGGVVKHHVCNANLMRNGADFTIILSNGQEFDGSDAGAKPEEALSWGKVRMEGAFVKVYGEVSTYLPLLLAEVFVPAVRQRRATDDAQPRRKRSSRGARPPQDVSGHSHLCRGE</sequence>
<reference evidence="6 7" key="1">
    <citation type="journal article" date="2010" name="J. Biol. Chem.">
        <title>Identification and characterization of a novel deoxyhypusine synthase in Leishmania donovani.</title>
        <authorList>
            <person name="Chawla B."/>
            <person name="Jhingran A."/>
            <person name="Singh S."/>
            <person name="Tyagi N."/>
            <person name="Park M.H."/>
            <person name="Srinivasan N."/>
            <person name="Roberts S.C."/>
            <person name="Madhubala R."/>
        </authorList>
    </citation>
    <scope>NUCLEOTIDE SEQUENCE [GENOMIC DNA]</scope>
    <scope>CATALYTIC ACTIVITY</scope>
    <scope>ACTIVITY REGULATION</scope>
    <scope>BIOPHYSICOCHEMICAL PROPERTIES</scope>
    <scope>HOMODIMERIZATION</scope>
    <scope>3D-STRUCTURE MODELING</scope>
</reference>
<name>DHYS_LEIDO</name>
<dbReference type="EC" id="2.5.1.46" evidence="1"/>
<dbReference type="EMBL" id="EU864544">
    <property type="protein sequence ID" value="ACF75531.1"/>
    <property type="molecule type" value="Genomic_DNA"/>
</dbReference>
<dbReference type="SMR" id="B5APK2"/>
<dbReference type="VEuPathDB" id="TriTrypDB:LdBPK_340350.1"/>
<dbReference type="VEuPathDB" id="TriTrypDB:LdCL_340008600"/>
<dbReference type="VEuPathDB" id="TriTrypDB:LDHU3_34.0520"/>
<dbReference type="BRENDA" id="2.5.1.46">
    <property type="organism ID" value="2947"/>
</dbReference>
<dbReference type="SABIO-RK" id="B5APK2"/>
<dbReference type="UniPathway" id="UPA00354"/>
<dbReference type="GO" id="GO:0005737">
    <property type="term" value="C:cytoplasm"/>
    <property type="evidence" value="ECO:0007669"/>
    <property type="project" value="TreeGrafter"/>
</dbReference>
<dbReference type="GO" id="GO:0034038">
    <property type="term" value="F:deoxyhypusine synthase activity"/>
    <property type="evidence" value="ECO:0007669"/>
    <property type="project" value="UniProtKB-EC"/>
</dbReference>
<dbReference type="GO" id="GO:0042803">
    <property type="term" value="F:protein homodimerization activity"/>
    <property type="evidence" value="ECO:0000314"/>
    <property type="project" value="UniProtKB"/>
</dbReference>
<dbReference type="GO" id="GO:0046516">
    <property type="term" value="P:hypusine metabolic process"/>
    <property type="evidence" value="ECO:0000314"/>
    <property type="project" value="UniProtKB"/>
</dbReference>
<dbReference type="GO" id="GO:0008612">
    <property type="term" value="P:peptidyl-lysine modification to peptidyl-hypusine"/>
    <property type="evidence" value="ECO:0000314"/>
    <property type="project" value="UniProtKB"/>
</dbReference>
<dbReference type="Gene3D" id="3.40.910.10">
    <property type="entry name" value="Deoxyhypusine synthase"/>
    <property type="match status" value="2"/>
</dbReference>
<dbReference type="InterPro" id="IPR002773">
    <property type="entry name" value="Deoxyhypusine_synthase"/>
</dbReference>
<dbReference type="InterPro" id="IPR036982">
    <property type="entry name" value="Deoxyhypusine_synthase_sf"/>
</dbReference>
<dbReference type="InterPro" id="IPR029035">
    <property type="entry name" value="DHS-like_NAD/FAD-binding_dom"/>
</dbReference>
<dbReference type="PANTHER" id="PTHR11703">
    <property type="entry name" value="DEOXYHYPUSINE SYNTHASE"/>
    <property type="match status" value="1"/>
</dbReference>
<dbReference type="PANTHER" id="PTHR11703:SF1">
    <property type="entry name" value="DEOXYHYPUSINE SYNTHASE"/>
    <property type="match status" value="1"/>
</dbReference>
<dbReference type="Pfam" id="PF01916">
    <property type="entry name" value="DS"/>
    <property type="match status" value="2"/>
</dbReference>
<dbReference type="SUPFAM" id="SSF52467">
    <property type="entry name" value="DHS-like NAD/FAD-binding domain"/>
    <property type="match status" value="1"/>
</dbReference>
<keyword id="KW-0386">Hypusine biosynthesis</keyword>
<keyword id="KW-0520">NAD</keyword>
<keyword id="KW-0808">Transferase</keyword>
<proteinExistence type="evidence at protein level"/>
<evidence type="ECO:0000250" key="1">
    <source>
        <dbReference type="UniProtKB" id="P49366"/>
    </source>
</evidence>
<evidence type="ECO:0000255" key="2"/>
<evidence type="ECO:0000256" key="3">
    <source>
        <dbReference type="SAM" id="MobiDB-lite"/>
    </source>
</evidence>
<evidence type="ECO:0000269" key="4">
    <source>
    </source>
</evidence>
<evidence type="ECO:0000303" key="5">
    <source>
    </source>
</evidence>
<evidence type="ECO:0000305" key="6"/>
<evidence type="ECO:0000312" key="7">
    <source>
        <dbReference type="EMBL" id="ACF75531.1"/>
    </source>
</evidence>
<comment type="function">
    <text evidence="1">Catalyzes the NAD-dependent oxidative cleavage of spermidine and the subsequent transfer of the butylamine moiety of spermidine to the epsilon-amino group of a specific lysine residue of the eIF-5A precursor protein to form the intermediate deoxyhypusine residue.</text>
</comment>
<comment type="catalytic activity">
    <reaction evidence="1 4">
        <text>[eIF5A protein]-L-lysine + spermidine = [eIF5A protein]-deoxyhypusine + propane-1,3-diamine</text>
        <dbReference type="Rhea" id="RHEA:33299"/>
        <dbReference type="Rhea" id="RHEA-COMP:10143"/>
        <dbReference type="Rhea" id="RHEA-COMP:10144"/>
        <dbReference type="ChEBI" id="CHEBI:29969"/>
        <dbReference type="ChEBI" id="CHEBI:57484"/>
        <dbReference type="ChEBI" id="CHEBI:57834"/>
        <dbReference type="ChEBI" id="CHEBI:82657"/>
        <dbReference type="EC" id="2.5.1.46"/>
    </reaction>
</comment>
<comment type="cofactor">
    <cofactor evidence="1">
        <name>NAD(+)</name>
        <dbReference type="ChEBI" id="CHEBI:57540"/>
    </cofactor>
</comment>
<comment type="activity regulation">
    <text evidence="4">N1-guanyl-1,7-diaminoheptane has a small inhibitory effect on activity.</text>
</comment>
<comment type="biophysicochemical properties">
    <kinetics>
        <KM evidence="4">1.77 uM for eIF5A</KM>
        <KM evidence="4">23.2 uM for spermidine</KM>
        <Vmax evidence="4">569.0 pmol/h/mg enzyme for the forward reaction</Vmax>
    </kinetics>
</comment>
<comment type="pathway">
    <text evidence="6">Protein modification; eIF5A hypusination.</text>
</comment>
<comment type="subunit">
    <text evidence="4">Homodimer.</text>
</comment>
<comment type="similarity">
    <text evidence="2">Belongs to the deoxyhypusine synthase family.</text>
</comment>
<protein>
    <recommendedName>
        <fullName evidence="1 7">Deoxyhypusine synthase</fullName>
        <shortName evidence="1">DHS</shortName>
        <ecNumber evidence="1">2.5.1.46</ecNumber>
    </recommendedName>
    <alternativeName>
        <fullName evidence="5">Deoxyhypusine synthase from chromosome 34</fullName>
        <shortName evidence="5">DHS34</shortName>
    </alternativeName>
</protein>
<organism>
    <name type="scientific">Leishmania donovani</name>
    <dbReference type="NCBI Taxonomy" id="5661"/>
    <lineage>
        <taxon>Eukaryota</taxon>
        <taxon>Discoba</taxon>
        <taxon>Euglenozoa</taxon>
        <taxon>Kinetoplastea</taxon>
        <taxon>Metakinetoplastina</taxon>
        <taxon>Trypanosomatida</taxon>
        <taxon>Trypanosomatidae</taxon>
        <taxon>Leishmaniinae</taxon>
        <taxon>Leishmania</taxon>
    </lineage>
</organism>